<reference key="1">
    <citation type="journal article" date="2008" name="Nature">
        <title>The Trichoplax genome and the nature of placozoans.</title>
        <authorList>
            <person name="Srivastava M."/>
            <person name="Begovic E."/>
            <person name="Chapman J."/>
            <person name="Putnam N.H."/>
            <person name="Hellsten U."/>
            <person name="Kawashima T."/>
            <person name="Kuo A."/>
            <person name="Mitros T."/>
            <person name="Salamov A."/>
            <person name="Carpenter M.L."/>
            <person name="Signorovitch A.Y."/>
            <person name="Moreno M.A."/>
            <person name="Kamm K."/>
            <person name="Grimwood J."/>
            <person name="Schmutz J."/>
            <person name="Shapiro H."/>
            <person name="Grigoriev I.V."/>
            <person name="Buss L.W."/>
            <person name="Schierwater B."/>
            <person name="Dellaporta S.L."/>
            <person name="Rokhsar D.S."/>
        </authorList>
    </citation>
    <scope>NUCLEOTIDE SEQUENCE [LARGE SCALE GENOMIC DNA]</scope>
    <source>
        <strain>Grell-BS-1999</strain>
    </source>
</reference>
<gene>
    <name type="ORF">TRIADDRAFT_25797</name>
</gene>
<feature type="chain" id="PRO_0000391897" description="E3 UFM1-protein ligase 1 homolog">
    <location>
        <begin position="1"/>
        <end position="780"/>
    </location>
</feature>
<feature type="region of interest" description="Disordered" evidence="2">
    <location>
        <begin position="403"/>
        <end position="458"/>
    </location>
</feature>
<feature type="region of interest" description="Disordered" evidence="2">
    <location>
        <begin position="734"/>
        <end position="760"/>
    </location>
</feature>
<feature type="compositionally biased region" description="Polar residues" evidence="2">
    <location>
        <begin position="403"/>
        <end position="413"/>
    </location>
</feature>
<feature type="compositionally biased region" description="Basic and acidic residues" evidence="2">
    <location>
        <begin position="443"/>
        <end position="458"/>
    </location>
</feature>
<feature type="compositionally biased region" description="Basic and acidic residues" evidence="2">
    <location>
        <begin position="736"/>
        <end position="750"/>
    </location>
</feature>
<comment type="function">
    <text evidence="1">E3 UFM1-protein ligase that mediates ufmylation of target proteins.</text>
</comment>
<comment type="similarity">
    <text evidence="3">Belongs to the UFL1 family.</text>
</comment>
<protein>
    <recommendedName>
        <fullName>E3 UFM1-protein ligase 1 homolog</fullName>
        <ecNumber>2.3.2.-</ecNumber>
    </recommendedName>
    <alternativeName>
        <fullName evidence="3">E3 UFM1-protein transferase 1 homolog</fullName>
    </alternativeName>
</protein>
<evidence type="ECO:0000250" key="1">
    <source>
        <dbReference type="UniProtKB" id="O94874"/>
    </source>
</evidence>
<evidence type="ECO:0000256" key="2">
    <source>
        <dbReference type="SAM" id="MobiDB-lite"/>
    </source>
</evidence>
<evidence type="ECO:0000305" key="3"/>
<sequence>MSDWNEIQRLAADFQRIQLTASAHQLSERNCIEIITKLIAMNKVQVMYTIDGKEYLTPQQLEREIRDELFVHSGRINLVELQQVINVDLTHIDSKVKEMLRGDRSLYLIQGDLIDRDYIDRLAEEINDILQESGQISVSELGKTFNLPTDFLQTNIEKRMGIYIHGQVNPLERGTIYTEAYVARHAAKIRGVFSAITRPTSVSSIIYQYSFPEALLHDILRKLLDEKRLAGSVQGHQSKAIYTPNIYSRTQSNWVLSFFRQNDYIEYDSLTRLDITDPKNYLKKCLNKNVIFLESCVSGQNILGQVQAAIEDVVATPSWVDIMTLLPSPFTTGDASVLLQKHCLKSNKNNTSVQCLCDKFVVSNKFIQNCLQLFDDHMKTKAEKVYFHLLFIDAGKVAAKFASTSSTNPNHSTLTKHDDSNVTGGKKKKGDDSTSSKRKGKGKDRSTPDDLESTRSHIKQNKQDLEFMAIPEIIEVLQREHSNCEDQFLEEIASQLFSPLKRKYQEVAKSVFLASTSSVTSEKRKLHSDAQDKINGLLTNAKLFGKGLQHFSGDAHTTLGKHLLHTLCTEITNIVFSLLISEHIMVDSDPNSLNPETRSSALEKFPNNVKKAASALEKSLSGKDVEQFFDALDVVLGPSICQIMIKKLDKKKERQIIFNHRQSLIEQLNKESKPAMCLHLCTLLLFQRHTQCMIHAPGRCIPQIISFLKQHLTDEQYKTIYEYQQLIIQSIQQSSDKQKPEMSEEPKDSDNSNDNQNIDLQLQEKMTTIKAIALENKKQS</sequence>
<proteinExistence type="inferred from homology"/>
<name>UFL1_TRIAD</name>
<dbReference type="EC" id="2.3.2.-"/>
<dbReference type="EMBL" id="DS985245">
    <property type="protein sequence ID" value="EDV25034.1"/>
    <property type="molecule type" value="Genomic_DNA"/>
</dbReference>
<dbReference type="RefSeq" id="XP_002112924.1">
    <property type="nucleotide sequence ID" value="XM_002112888.1"/>
</dbReference>
<dbReference type="SMR" id="B3RYG4"/>
<dbReference type="FunCoup" id="B3RYG4">
    <property type="interactions" value="2412"/>
</dbReference>
<dbReference type="STRING" id="10228.B3RYG4"/>
<dbReference type="EnsemblMetazoa" id="TriadT25797">
    <property type="protein sequence ID" value="TriadP25797"/>
    <property type="gene ID" value="TriadG25797"/>
</dbReference>
<dbReference type="GeneID" id="6754137"/>
<dbReference type="KEGG" id="tad:TRIADDRAFT_25797"/>
<dbReference type="CTD" id="6754137"/>
<dbReference type="eggNOG" id="KOG2235">
    <property type="taxonomic scope" value="Eukaryota"/>
</dbReference>
<dbReference type="HOGENOM" id="CLU_012417_1_1_1"/>
<dbReference type="InParanoid" id="B3RYG4"/>
<dbReference type="OMA" id="CILHASG"/>
<dbReference type="OrthoDB" id="10258297at2759"/>
<dbReference type="PhylomeDB" id="B3RYG4"/>
<dbReference type="Proteomes" id="UP000009022">
    <property type="component" value="Unassembled WGS sequence"/>
</dbReference>
<dbReference type="GO" id="GO:0005789">
    <property type="term" value="C:endoplasmic reticulum membrane"/>
    <property type="evidence" value="ECO:0000318"/>
    <property type="project" value="GO_Central"/>
</dbReference>
<dbReference type="GO" id="GO:0061666">
    <property type="term" value="F:UFM1 ligase activity"/>
    <property type="evidence" value="ECO:0007669"/>
    <property type="project" value="InterPro"/>
</dbReference>
<dbReference type="GO" id="GO:0071568">
    <property type="term" value="F:UFM1 transferase activity"/>
    <property type="evidence" value="ECO:0000318"/>
    <property type="project" value="GO_Central"/>
</dbReference>
<dbReference type="GO" id="GO:0071569">
    <property type="term" value="P:protein ufmylation"/>
    <property type="evidence" value="ECO:0007669"/>
    <property type="project" value="InterPro"/>
</dbReference>
<dbReference type="GO" id="GO:0034976">
    <property type="term" value="P:response to endoplasmic reticulum stress"/>
    <property type="evidence" value="ECO:0000318"/>
    <property type="project" value="GO_Central"/>
</dbReference>
<dbReference type="GO" id="GO:0061709">
    <property type="term" value="P:reticulophagy"/>
    <property type="evidence" value="ECO:0000318"/>
    <property type="project" value="GO_Central"/>
</dbReference>
<dbReference type="InterPro" id="IPR018611">
    <property type="entry name" value="Ufl1"/>
</dbReference>
<dbReference type="InterPro" id="IPR056761">
    <property type="entry name" value="Ufl1-like_C"/>
</dbReference>
<dbReference type="InterPro" id="IPR056580">
    <property type="entry name" value="Ufl1_dom"/>
</dbReference>
<dbReference type="InterPro" id="IPR056579">
    <property type="entry name" value="Ufl1_N"/>
</dbReference>
<dbReference type="PANTHER" id="PTHR31057">
    <property type="entry name" value="E3 UFM1-PROTEIN LIGASE 1"/>
    <property type="match status" value="1"/>
</dbReference>
<dbReference type="PANTHER" id="PTHR31057:SF0">
    <property type="entry name" value="E3 UFM1-PROTEIN LIGASE 1"/>
    <property type="match status" value="1"/>
</dbReference>
<dbReference type="Pfam" id="PF09743">
    <property type="entry name" value="E3_UFM1_ligase"/>
    <property type="match status" value="1"/>
</dbReference>
<dbReference type="Pfam" id="PF23659">
    <property type="entry name" value="UFL1"/>
    <property type="match status" value="1"/>
</dbReference>
<dbReference type="Pfam" id="PF25041">
    <property type="entry name" value="UFL1_C"/>
    <property type="match status" value="1"/>
</dbReference>
<accession>B3RYG4</accession>
<keyword id="KW-1185">Reference proteome</keyword>
<keyword id="KW-0808">Transferase</keyword>
<keyword id="KW-0833">Ubl conjugation pathway</keyword>
<organism>
    <name type="scientific">Trichoplax adhaerens</name>
    <name type="common">Trichoplax reptans</name>
    <dbReference type="NCBI Taxonomy" id="10228"/>
    <lineage>
        <taxon>Eukaryota</taxon>
        <taxon>Metazoa</taxon>
        <taxon>Placozoa</taxon>
        <taxon>Uniplacotomia</taxon>
        <taxon>Trichoplacea</taxon>
        <taxon>Trichoplacidae</taxon>
        <taxon>Trichoplax</taxon>
    </lineage>
</organism>